<protein>
    <recommendedName>
        <fullName>Alternative oxidase, mitochondrial</fullName>
        <ecNumber>1.-.-.-</ecNumber>
    </recommendedName>
</protein>
<comment type="function">
    <text evidence="1">Catalyzes cyanide-resistant oxygen consumption. May increase respiration when the cytochrome respiratory pathway is restricted, or in response to low temperatures (By similarity).</text>
</comment>
<comment type="cofactor">
    <cofactor evidence="2">
        <name>Fe cation</name>
        <dbReference type="ChEBI" id="CHEBI:24875"/>
    </cofactor>
    <text evidence="2">Binds 2 iron ions per subunit.</text>
</comment>
<comment type="subcellular location">
    <subcellularLocation>
        <location evidence="1">Mitochondrion inner membrane</location>
        <topology evidence="1">Multi-pass membrane protein</topology>
        <orientation evidence="1">Matrix side</orientation>
    </subcellularLocation>
</comment>
<comment type="similarity">
    <text evidence="4">Belongs to the alternative oxidase family.</text>
</comment>
<accession>Q8J1Z2</accession>
<keyword id="KW-0249">Electron transport</keyword>
<keyword id="KW-0408">Iron</keyword>
<keyword id="KW-0472">Membrane</keyword>
<keyword id="KW-0479">Metal-binding</keyword>
<keyword id="KW-0496">Mitochondrion</keyword>
<keyword id="KW-0999">Mitochondrion inner membrane</keyword>
<keyword id="KW-0560">Oxidoreductase</keyword>
<keyword id="KW-0679">Respiratory chain</keyword>
<keyword id="KW-0809">Transit peptide</keyword>
<keyword id="KW-0812">Transmembrane</keyword>
<keyword id="KW-1133">Transmembrane helix</keyword>
<keyword id="KW-0813">Transport</keyword>
<gene>
    <name type="primary">aod-1</name>
</gene>
<feature type="transit peptide" description="Mitochondrion" evidence="3">
    <location>
        <begin position="1"/>
        <end position="64"/>
    </location>
</feature>
<feature type="chain" id="PRO_0000001722" description="Alternative oxidase, mitochondrial">
    <location>
        <begin position="65"/>
        <end position="362"/>
    </location>
</feature>
<feature type="transmembrane region" description="Helical" evidence="3">
    <location>
        <begin position="156"/>
        <end position="176"/>
    </location>
</feature>
<feature type="transmembrane region" description="Helical" evidence="3">
    <location>
        <begin position="222"/>
        <end position="242"/>
    </location>
</feature>
<feature type="binding site" evidence="2">
    <location>
        <position position="163"/>
    </location>
    <ligand>
        <name>Fe cation</name>
        <dbReference type="ChEBI" id="CHEBI:24875"/>
        <label>1</label>
    </ligand>
</feature>
<feature type="binding site" evidence="2">
    <location>
        <position position="202"/>
    </location>
    <ligand>
        <name>Fe cation</name>
        <dbReference type="ChEBI" id="CHEBI:24875"/>
        <label>1</label>
    </ligand>
</feature>
<feature type="binding site" evidence="2">
    <location>
        <position position="202"/>
    </location>
    <ligand>
        <name>Fe cation</name>
        <dbReference type="ChEBI" id="CHEBI:24875"/>
        <label>2</label>
    </ligand>
</feature>
<feature type="binding site" evidence="2">
    <location>
        <position position="205"/>
    </location>
    <ligand>
        <name>Fe cation</name>
        <dbReference type="ChEBI" id="CHEBI:24875"/>
        <label>1</label>
    </ligand>
</feature>
<feature type="binding site" evidence="2">
    <location>
        <position position="253"/>
    </location>
    <ligand>
        <name>Fe cation</name>
        <dbReference type="ChEBI" id="CHEBI:24875"/>
        <label>2</label>
    </ligand>
</feature>
<feature type="binding site" evidence="2">
    <location>
        <position position="310"/>
    </location>
    <ligand>
        <name>Fe cation</name>
        <dbReference type="ChEBI" id="CHEBI:24875"/>
        <label>1</label>
    </ligand>
</feature>
<feature type="binding site" evidence="2">
    <location>
        <position position="310"/>
    </location>
    <ligand>
        <name>Fe cation</name>
        <dbReference type="ChEBI" id="CHEBI:24875"/>
        <label>2</label>
    </ligand>
</feature>
<feature type="binding site" evidence="2">
    <location>
        <position position="313"/>
    </location>
    <ligand>
        <name>Fe cation</name>
        <dbReference type="ChEBI" id="CHEBI:24875"/>
        <label>2</label>
    </ligand>
</feature>
<proteinExistence type="inferred from homology"/>
<evidence type="ECO:0000250" key="1"/>
<evidence type="ECO:0000250" key="2">
    <source>
        <dbReference type="UniProtKB" id="Q26710"/>
    </source>
</evidence>
<evidence type="ECO:0000255" key="3"/>
<evidence type="ECO:0000305" key="4"/>
<dbReference type="EC" id="1.-.-.-"/>
<dbReference type="EMBL" id="AY140655">
    <property type="protein sequence ID" value="AAN39884.1"/>
    <property type="molecule type" value="Genomic_DNA"/>
</dbReference>
<dbReference type="SMR" id="Q8J1Z2"/>
<dbReference type="GO" id="GO:0005743">
    <property type="term" value="C:mitochondrial inner membrane"/>
    <property type="evidence" value="ECO:0007669"/>
    <property type="project" value="UniProtKB-SubCell"/>
</dbReference>
<dbReference type="GO" id="GO:0009916">
    <property type="term" value="F:alternative oxidase activity"/>
    <property type="evidence" value="ECO:0007669"/>
    <property type="project" value="InterPro"/>
</dbReference>
<dbReference type="GO" id="GO:0046872">
    <property type="term" value="F:metal ion binding"/>
    <property type="evidence" value="ECO:0007669"/>
    <property type="project" value="UniProtKB-KW"/>
</dbReference>
<dbReference type="GO" id="GO:0010230">
    <property type="term" value="P:alternative respiration"/>
    <property type="evidence" value="ECO:0007669"/>
    <property type="project" value="TreeGrafter"/>
</dbReference>
<dbReference type="CDD" id="cd01053">
    <property type="entry name" value="AOX"/>
    <property type="match status" value="1"/>
</dbReference>
<dbReference type="FunFam" id="1.20.1260.140:FF:000002">
    <property type="entry name" value="Alternative oxidase"/>
    <property type="match status" value="1"/>
</dbReference>
<dbReference type="Gene3D" id="1.20.1260.140">
    <property type="entry name" value="Alternative oxidase"/>
    <property type="match status" value="1"/>
</dbReference>
<dbReference type="InterPro" id="IPR002680">
    <property type="entry name" value="AOX"/>
</dbReference>
<dbReference type="InterPro" id="IPR038659">
    <property type="entry name" value="AOX_sf"/>
</dbReference>
<dbReference type="PANTHER" id="PTHR31803">
    <property type="entry name" value="ALTERNATIVE OXIDASE"/>
    <property type="match status" value="1"/>
</dbReference>
<dbReference type="PANTHER" id="PTHR31803:SF3">
    <property type="entry name" value="ALTERNATIVE OXIDASE"/>
    <property type="match status" value="1"/>
</dbReference>
<dbReference type="Pfam" id="PF01786">
    <property type="entry name" value="AOX"/>
    <property type="match status" value="1"/>
</dbReference>
<dbReference type="PIRSF" id="PIRSF005229">
    <property type="entry name" value="AOX"/>
    <property type="match status" value="1"/>
</dbReference>
<organism>
    <name type="scientific">Gelasinospora sp. (strain S23)</name>
    <dbReference type="NCBI Taxonomy" id="210212"/>
    <lineage>
        <taxon>Eukaryota</taxon>
        <taxon>Fungi</taxon>
        <taxon>Dikarya</taxon>
        <taxon>Ascomycota</taxon>
        <taxon>Pezizomycotina</taxon>
        <taxon>Sordariomycetes</taxon>
        <taxon>Sordariomycetidae</taxon>
        <taxon>Sordariales</taxon>
        <taxon>Sordariaceae</taxon>
        <taxon>Gelasinospora</taxon>
    </lineage>
</organism>
<name>AOX_GELSS</name>
<sequence>MNTPKVNILYSPGQAAQLSRTLISTCHTRPFLLGGLRVATSLHPTQTNLSSSPPRGFTTTSVVRLKDFFPAKETAYIRQTPPAWPHHGWTEEEMISVVPEHRKPETVGDWLAWKLVRICRWGTDIATGIRPEQQVDKNHPTTATSADKPLTEAQWLVRFIFLESIAGVPGMVAGMLRHLHSLRRLKRDNGWIETLLEESYNERMHLLTFMKMCEPGLLMKTLILGAQGVFFNAMFLSYLVSPKITHRFVGYLEEEAVHTYTRCIREIEEGHLPKWSDERFEIPEMAVRYWRMPEGKRTMKDLIYYIRADEAVHRGVNHTLSNLDQKEDPNPFVNDYKEGEGGRRPVNPALKPTGFERAEVIR</sequence>
<reference key="1">
    <citation type="journal article" date="2003" name="Fungal Genet. Biol.">
        <title>Alternative oxidase expression in Neurospora crassa.</title>
        <authorList>
            <person name="Tanton L.L."/>
            <person name="Nargang C.E."/>
            <person name="Kessler K.E."/>
            <person name="Li Q."/>
            <person name="Nargang F.E."/>
        </authorList>
    </citation>
    <scope>NUCLEOTIDE SEQUENCE [GENOMIC DNA]</scope>
</reference>